<comment type="function">
    <text evidence="1">Catalyzes the irreversible transfer of a propylamine group from the amino donor S-adenosylmethioninamine (decarboxy-AdoMet) to putrescine (1,4-diaminobutane) to yield spermidine.</text>
</comment>
<comment type="catalytic activity">
    <reaction evidence="1">
        <text>S-adenosyl 3-(methylsulfanyl)propylamine + putrescine = S-methyl-5'-thioadenosine + spermidine + H(+)</text>
        <dbReference type="Rhea" id="RHEA:12721"/>
        <dbReference type="ChEBI" id="CHEBI:15378"/>
        <dbReference type="ChEBI" id="CHEBI:17509"/>
        <dbReference type="ChEBI" id="CHEBI:57443"/>
        <dbReference type="ChEBI" id="CHEBI:57834"/>
        <dbReference type="ChEBI" id="CHEBI:326268"/>
        <dbReference type="EC" id="2.5.1.16"/>
    </reaction>
</comment>
<comment type="pathway">
    <text evidence="1">Amine and polyamine biosynthesis; spermidine biosynthesis; spermidine from putrescine: step 1/1.</text>
</comment>
<comment type="subunit">
    <text evidence="1">Homodimer or homotetramer.</text>
</comment>
<comment type="subcellular location">
    <subcellularLocation>
        <location evidence="1">Cytoplasm</location>
    </subcellularLocation>
</comment>
<comment type="similarity">
    <text evidence="1">Belongs to the spermidine/spermine synthase family.</text>
</comment>
<dbReference type="EC" id="2.5.1.16" evidence="1"/>
<dbReference type="EMBL" id="CP001011">
    <property type="protein sequence ID" value="ACB91562.1"/>
    <property type="molecule type" value="Genomic_DNA"/>
</dbReference>
<dbReference type="RefSeq" id="WP_004087589.1">
    <property type="nucleotide sequence ID" value="NC_010577.1"/>
</dbReference>
<dbReference type="SMR" id="B2I6M0"/>
<dbReference type="GeneID" id="93903803"/>
<dbReference type="KEGG" id="xfn:XfasM23_0105"/>
<dbReference type="HOGENOM" id="CLU_048199_0_0_6"/>
<dbReference type="UniPathway" id="UPA00248">
    <property type="reaction ID" value="UER00314"/>
</dbReference>
<dbReference type="Proteomes" id="UP000001698">
    <property type="component" value="Chromosome"/>
</dbReference>
<dbReference type="GO" id="GO:0005829">
    <property type="term" value="C:cytosol"/>
    <property type="evidence" value="ECO:0007669"/>
    <property type="project" value="TreeGrafter"/>
</dbReference>
<dbReference type="GO" id="GO:0004766">
    <property type="term" value="F:spermidine synthase activity"/>
    <property type="evidence" value="ECO:0007669"/>
    <property type="project" value="UniProtKB-UniRule"/>
</dbReference>
<dbReference type="GO" id="GO:0008295">
    <property type="term" value="P:spermidine biosynthetic process"/>
    <property type="evidence" value="ECO:0007669"/>
    <property type="project" value="UniProtKB-UniRule"/>
</dbReference>
<dbReference type="CDD" id="cd02440">
    <property type="entry name" value="AdoMet_MTases"/>
    <property type="match status" value="1"/>
</dbReference>
<dbReference type="Gene3D" id="2.30.140.10">
    <property type="entry name" value="Spermidine synthase, tetramerisation domain"/>
    <property type="match status" value="1"/>
</dbReference>
<dbReference type="Gene3D" id="3.40.50.150">
    <property type="entry name" value="Vaccinia Virus protein VP39"/>
    <property type="match status" value="1"/>
</dbReference>
<dbReference type="HAMAP" id="MF_00198">
    <property type="entry name" value="Spermidine_synth"/>
    <property type="match status" value="1"/>
</dbReference>
<dbReference type="InterPro" id="IPR030374">
    <property type="entry name" value="PABS"/>
</dbReference>
<dbReference type="InterPro" id="IPR030373">
    <property type="entry name" value="PABS_CS"/>
</dbReference>
<dbReference type="InterPro" id="IPR029063">
    <property type="entry name" value="SAM-dependent_MTases_sf"/>
</dbReference>
<dbReference type="InterPro" id="IPR001045">
    <property type="entry name" value="Spermi_synthase"/>
</dbReference>
<dbReference type="InterPro" id="IPR035246">
    <property type="entry name" value="Spermidine_synt_N"/>
</dbReference>
<dbReference type="InterPro" id="IPR037163">
    <property type="entry name" value="Spermidine_synt_N_sf"/>
</dbReference>
<dbReference type="NCBIfam" id="NF002010">
    <property type="entry name" value="PRK00811.1"/>
    <property type="match status" value="1"/>
</dbReference>
<dbReference type="NCBIfam" id="TIGR00417">
    <property type="entry name" value="speE"/>
    <property type="match status" value="1"/>
</dbReference>
<dbReference type="PANTHER" id="PTHR11558:SF11">
    <property type="entry name" value="SPERMIDINE SYNTHASE"/>
    <property type="match status" value="1"/>
</dbReference>
<dbReference type="PANTHER" id="PTHR11558">
    <property type="entry name" value="SPERMIDINE/SPERMINE SYNTHASE"/>
    <property type="match status" value="1"/>
</dbReference>
<dbReference type="Pfam" id="PF17284">
    <property type="entry name" value="Spermine_synt_N"/>
    <property type="match status" value="1"/>
</dbReference>
<dbReference type="Pfam" id="PF01564">
    <property type="entry name" value="Spermine_synth"/>
    <property type="match status" value="1"/>
</dbReference>
<dbReference type="SUPFAM" id="SSF53335">
    <property type="entry name" value="S-adenosyl-L-methionine-dependent methyltransferases"/>
    <property type="match status" value="1"/>
</dbReference>
<dbReference type="PROSITE" id="PS01330">
    <property type="entry name" value="PABS_1"/>
    <property type="match status" value="1"/>
</dbReference>
<dbReference type="PROSITE" id="PS51006">
    <property type="entry name" value="PABS_2"/>
    <property type="match status" value="1"/>
</dbReference>
<evidence type="ECO:0000255" key="1">
    <source>
        <dbReference type="HAMAP-Rule" id="MF_00198"/>
    </source>
</evidence>
<organism>
    <name type="scientific">Xylella fastidiosa (strain M23)</name>
    <dbReference type="NCBI Taxonomy" id="405441"/>
    <lineage>
        <taxon>Bacteria</taxon>
        <taxon>Pseudomonadati</taxon>
        <taxon>Pseudomonadota</taxon>
        <taxon>Gammaproteobacteria</taxon>
        <taxon>Lysobacterales</taxon>
        <taxon>Lysobacteraceae</taxon>
        <taxon>Xylella</taxon>
    </lineage>
</organism>
<gene>
    <name evidence="1" type="primary">speE</name>
    <name type="ordered locus">XfasM23_0105</name>
</gene>
<proteinExistence type="inferred from homology"/>
<accession>B2I6M0</accession>
<sequence length="285" mass="31921">MTTNDTWFTEHFQTTGSAIGFRVTGKLDEVQSPFQKIEIYNSTDWGKLMVIDGALMLTSRDNFLYHEMISHPALFTHTAPKCVVIIGGGDCGTLREVLKHPDIEQVTQCDIDEQVTRMAEKHFPELCTSNNDPRATLLFSDGVAYMADCPTNSVDVIIVDSTDPVGPAKGLFNRTFYESCFRALKNDGLLIQQSESPLALLELIKEMRHEMSKAGFKAFKTLPFPQPCYPTGWWSVTLSSKQPNANFAFRQTDAQTKPFDTLYYNAHLHHGVLVPPPFIAHALGE</sequence>
<feature type="chain" id="PRO_1000099308" description="Polyamine aminopropyltransferase">
    <location>
        <begin position="1"/>
        <end position="285"/>
    </location>
</feature>
<feature type="domain" description="PABS" evidence="1">
    <location>
        <begin position="5"/>
        <end position="241"/>
    </location>
</feature>
<feature type="active site" description="Proton acceptor" evidence="1">
    <location>
        <position position="160"/>
    </location>
</feature>
<feature type="binding site" evidence="1">
    <location>
        <position position="35"/>
    </location>
    <ligand>
        <name>S-methyl-5'-thioadenosine</name>
        <dbReference type="ChEBI" id="CHEBI:17509"/>
    </ligand>
</feature>
<feature type="binding site" evidence="1">
    <location>
        <position position="66"/>
    </location>
    <ligand>
        <name>spermidine</name>
        <dbReference type="ChEBI" id="CHEBI:57834"/>
    </ligand>
</feature>
<feature type="binding site" evidence="1">
    <location>
        <position position="90"/>
    </location>
    <ligand>
        <name>spermidine</name>
        <dbReference type="ChEBI" id="CHEBI:57834"/>
    </ligand>
</feature>
<feature type="binding site" evidence="1">
    <location>
        <position position="110"/>
    </location>
    <ligand>
        <name>S-methyl-5'-thioadenosine</name>
        <dbReference type="ChEBI" id="CHEBI:17509"/>
    </ligand>
</feature>
<feature type="binding site" evidence="1">
    <location>
        <begin position="141"/>
        <end position="142"/>
    </location>
    <ligand>
        <name>S-methyl-5'-thioadenosine</name>
        <dbReference type="ChEBI" id="CHEBI:17509"/>
    </ligand>
</feature>
<feature type="binding site" evidence="1">
    <location>
        <begin position="160"/>
        <end position="163"/>
    </location>
    <ligand>
        <name>spermidine</name>
        <dbReference type="ChEBI" id="CHEBI:57834"/>
    </ligand>
</feature>
<feature type="binding site" evidence="1">
    <location>
        <position position="167"/>
    </location>
    <ligand>
        <name>S-methyl-5'-thioadenosine</name>
        <dbReference type="ChEBI" id="CHEBI:17509"/>
    </ligand>
</feature>
<reference key="1">
    <citation type="journal article" date="2010" name="J. Bacteriol.">
        <title>Whole genome sequences of two Xylella fastidiosa strains (M12 and M23) causing almond leaf scorch disease in California.</title>
        <authorList>
            <person name="Chen J."/>
            <person name="Xie G."/>
            <person name="Han S."/>
            <person name="Chertkov O."/>
            <person name="Sims D."/>
            <person name="Civerolo E.L."/>
        </authorList>
    </citation>
    <scope>NUCLEOTIDE SEQUENCE [LARGE SCALE GENOMIC DNA]</scope>
    <source>
        <strain>M23</strain>
    </source>
</reference>
<protein>
    <recommendedName>
        <fullName evidence="1">Polyamine aminopropyltransferase</fullName>
    </recommendedName>
    <alternativeName>
        <fullName evidence="1">Putrescine aminopropyltransferase</fullName>
        <shortName evidence="1">PAPT</shortName>
    </alternativeName>
    <alternativeName>
        <fullName evidence="1">Spermidine synthase</fullName>
        <shortName evidence="1">SPDS</shortName>
        <shortName evidence="1">SPDSY</shortName>
        <ecNumber evidence="1">2.5.1.16</ecNumber>
    </alternativeName>
</protein>
<name>SPEE_XYLF2</name>
<keyword id="KW-0963">Cytoplasm</keyword>
<keyword id="KW-0620">Polyamine biosynthesis</keyword>
<keyword id="KW-0745">Spermidine biosynthesis</keyword>
<keyword id="KW-0808">Transferase</keyword>